<reference key="1">
    <citation type="journal article" date="2011" name="J. Bacteriol.">
        <title>Complete genome sequence and updated annotation of Desulfovibrio alaskensis G20.</title>
        <authorList>
            <person name="Hauser L.J."/>
            <person name="Land M.L."/>
            <person name="Brown S.D."/>
            <person name="Larimer F."/>
            <person name="Keller K.L."/>
            <person name="Rapp-Giles B.J."/>
            <person name="Price M.N."/>
            <person name="Lin M."/>
            <person name="Bruce D.C."/>
            <person name="Detter J.C."/>
            <person name="Tapia R."/>
            <person name="Han C.S."/>
            <person name="Goodwin L.A."/>
            <person name="Cheng J.F."/>
            <person name="Pitluck S."/>
            <person name="Copeland A."/>
            <person name="Lucas S."/>
            <person name="Nolan M."/>
            <person name="Lapidus A.L."/>
            <person name="Palumbo A.V."/>
            <person name="Wall J.D."/>
        </authorList>
    </citation>
    <scope>NUCLEOTIDE SEQUENCE [LARGE SCALE GENOMIC DNA]</scope>
    <source>
        <strain>ATCC BAA-1058 / DSM 17464 / G20</strain>
    </source>
</reference>
<organism>
    <name type="scientific">Oleidesulfovibrio alaskensis (strain ATCC BAA-1058 / DSM 17464 / G20)</name>
    <name type="common">Desulfovibrio alaskensis</name>
    <dbReference type="NCBI Taxonomy" id="207559"/>
    <lineage>
        <taxon>Bacteria</taxon>
        <taxon>Pseudomonadati</taxon>
        <taxon>Thermodesulfobacteriota</taxon>
        <taxon>Desulfovibrionia</taxon>
        <taxon>Desulfovibrionales</taxon>
        <taxon>Desulfovibrionaceae</taxon>
        <taxon>Oleidesulfovibrio</taxon>
    </lineage>
</organism>
<protein>
    <recommendedName>
        <fullName evidence="1">Large ribosomal subunit protein bL28</fullName>
    </recommendedName>
    <alternativeName>
        <fullName evidence="2">50S ribosomal protein L28</fullName>
    </alternativeName>
</protein>
<dbReference type="EMBL" id="CP000112">
    <property type="protein sequence ID" value="ABB39222.1"/>
    <property type="molecule type" value="Genomic_DNA"/>
</dbReference>
<dbReference type="RefSeq" id="WP_011368290.1">
    <property type="nucleotide sequence ID" value="NC_007519.1"/>
</dbReference>
<dbReference type="SMR" id="Q30YM4"/>
<dbReference type="STRING" id="207559.Dde_2425"/>
<dbReference type="KEGG" id="dde:Dde_2425"/>
<dbReference type="eggNOG" id="COG0227">
    <property type="taxonomic scope" value="Bacteria"/>
</dbReference>
<dbReference type="HOGENOM" id="CLU_064548_7_0_7"/>
<dbReference type="Proteomes" id="UP000002710">
    <property type="component" value="Chromosome"/>
</dbReference>
<dbReference type="GO" id="GO:1990904">
    <property type="term" value="C:ribonucleoprotein complex"/>
    <property type="evidence" value="ECO:0007669"/>
    <property type="project" value="UniProtKB-KW"/>
</dbReference>
<dbReference type="GO" id="GO:0005840">
    <property type="term" value="C:ribosome"/>
    <property type="evidence" value="ECO:0007669"/>
    <property type="project" value="UniProtKB-KW"/>
</dbReference>
<dbReference type="GO" id="GO:0003735">
    <property type="term" value="F:structural constituent of ribosome"/>
    <property type="evidence" value="ECO:0007669"/>
    <property type="project" value="InterPro"/>
</dbReference>
<dbReference type="GO" id="GO:0006412">
    <property type="term" value="P:translation"/>
    <property type="evidence" value="ECO:0007669"/>
    <property type="project" value="UniProtKB-UniRule"/>
</dbReference>
<dbReference type="Gene3D" id="2.30.170.40">
    <property type="entry name" value="Ribosomal protein L28/L24"/>
    <property type="match status" value="1"/>
</dbReference>
<dbReference type="HAMAP" id="MF_00373">
    <property type="entry name" value="Ribosomal_bL28"/>
    <property type="match status" value="1"/>
</dbReference>
<dbReference type="InterPro" id="IPR050096">
    <property type="entry name" value="Bacterial_rp_bL28"/>
</dbReference>
<dbReference type="InterPro" id="IPR026569">
    <property type="entry name" value="Ribosomal_bL28"/>
</dbReference>
<dbReference type="InterPro" id="IPR034704">
    <property type="entry name" value="Ribosomal_bL28/bL31-like_sf"/>
</dbReference>
<dbReference type="InterPro" id="IPR001383">
    <property type="entry name" value="Ribosomal_bL28_bact-type"/>
</dbReference>
<dbReference type="InterPro" id="IPR037147">
    <property type="entry name" value="Ribosomal_bL28_sf"/>
</dbReference>
<dbReference type="NCBIfam" id="TIGR00009">
    <property type="entry name" value="L28"/>
    <property type="match status" value="1"/>
</dbReference>
<dbReference type="PANTHER" id="PTHR39080">
    <property type="entry name" value="50S RIBOSOMAL PROTEIN L28"/>
    <property type="match status" value="1"/>
</dbReference>
<dbReference type="PANTHER" id="PTHR39080:SF1">
    <property type="entry name" value="LARGE RIBOSOMAL SUBUNIT PROTEIN BL28A"/>
    <property type="match status" value="1"/>
</dbReference>
<dbReference type="Pfam" id="PF00830">
    <property type="entry name" value="Ribosomal_L28"/>
    <property type="match status" value="1"/>
</dbReference>
<dbReference type="SUPFAM" id="SSF143800">
    <property type="entry name" value="L28p-like"/>
    <property type="match status" value="1"/>
</dbReference>
<evidence type="ECO:0000255" key="1">
    <source>
        <dbReference type="HAMAP-Rule" id="MF_00373"/>
    </source>
</evidence>
<evidence type="ECO:0000305" key="2"/>
<comment type="similarity">
    <text evidence="1">Belongs to the bacterial ribosomal protein bL28 family.</text>
</comment>
<accession>Q30YM4</accession>
<gene>
    <name evidence="1" type="primary">rpmB</name>
    <name type="ordered locus">Dde_2425</name>
</gene>
<sequence length="69" mass="7611">MGKQCEFCGKKPQTGNNVSHSNIKTKRRFMPNLQSARHQLPTGQIKTVSVCTRCLRSGAVVKPVVKKTA</sequence>
<proteinExistence type="inferred from homology"/>
<name>RL28_OLEA2</name>
<feature type="chain" id="PRO_1000007224" description="Large ribosomal subunit protein bL28">
    <location>
        <begin position="1"/>
        <end position="69"/>
    </location>
</feature>
<keyword id="KW-1185">Reference proteome</keyword>
<keyword id="KW-0687">Ribonucleoprotein</keyword>
<keyword id="KW-0689">Ribosomal protein</keyword>